<comment type="function">
    <text evidence="3 4">Involved in the biosynthesis of the yellow-orange carotenoid staphyloxanthin, which plays a role in the virulence via its protective function against oxidative stress (PubMed:15933032, PubMed:22535955). Catalyzes the oxidation of the terminal methyl side group of 4,4'-diaponeurosporene to form 4,4'-diaponeurosporen-4-al (PubMed:15933032, PubMed:22535955).</text>
</comment>
<comment type="catalytic activity">
    <reaction evidence="8">
        <text>all-trans-4,4'-diaponeurosporene + 2 AH2 + 2 O2 = 4,4'-diaponeurosporenal + 2 A + 3 H2O</text>
        <dbReference type="Rhea" id="RHEA:56104"/>
        <dbReference type="ChEBI" id="CHEBI:13193"/>
        <dbReference type="ChEBI" id="CHEBI:15377"/>
        <dbReference type="ChEBI" id="CHEBI:15379"/>
        <dbReference type="ChEBI" id="CHEBI:17499"/>
        <dbReference type="ChEBI" id="CHEBI:62743"/>
        <dbReference type="ChEBI" id="CHEBI:79065"/>
    </reaction>
</comment>
<comment type="cofactor">
    <cofactor evidence="1">
        <name>FAD</name>
        <dbReference type="ChEBI" id="CHEBI:57692"/>
    </cofactor>
</comment>
<comment type="pathway">
    <text evidence="4">Carotenoid biosynthesis; staphyloxanthin biosynthesis; staphyloxanthin from farnesyl diphosphate: step 3/5.</text>
</comment>
<comment type="miscellaneous">
    <text evidence="3">Upon coexpression with Methylomonas 4,4'-diapophytoene desaturase (CrtN), CrtP produces 4,4'-diapolycopene dialdehyde, thus accepting 4,4'-diapolycopene as substrate.</text>
</comment>
<comment type="similarity">
    <text evidence="7">Belongs to the carotenoid/retinoid oxidoreductase family. CrtP subfamily.</text>
</comment>
<accession>Q2FV57</accession>
<sequence>MTKHIIVIGGGLGGISAAIRMAQSGYSVSLYEQNNHIGGKVNRHESDGFGFDLGPSILTMPYIFEKLFEYSKKQMSDYVTIKRLPHQWRSFFPDGTTIDLYEGIKETGQHNAILSKQDIEELQNYLNYTRRIDRITEKGYFNYGLDTLSQIIKFHGPLNALINYDYVHTMQQAIDKRISNPYLRQMLGYFIKYVGSSSYDAPAVLSMLFHMQQEQGLWYVEGGIHHLANALEKLAREEGVTIHTGARVDNIKTYQRRVTGVRLDTGEFVKADYIISNMEVIPTYKYLIHLDTQRLNKLEREFEPASSGYVMHLGVACQYPQLAHHNFFFTENAYLNYQQVFHEKVLPDDPTIYLVNTNKTDHTQAPVGYENIKVLPHIPYIQDQPFTTEDYAKFRDKILDKLEKMGLTDLRKHIIYEDVWTPEDIEKNYRSNRGAIYGVVADKKKNKGFKFPKESQYFENLYFVGGSVNPGGGMPMVTLSGQQVADKINAREAKNRK</sequence>
<keyword id="KW-0125">Carotenoid biosynthesis</keyword>
<keyword id="KW-0274">FAD</keyword>
<keyword id="KW-0285">Flavoprotein</keyword>
<keyword id="KW-0560">Oxidoreductase</keyword>
<keyword id="KW-1185">Reference proteome</keyword>
<keyword id="KW-0843">Virulence</keyword>
<gene>
    <name evidence="6" type="primary">crtP</name>
    <name evidence="5" type="synonym">crtNb</name>
    <name type="ordered locus">SAOUHSC_02881</name>
</gene>
<evidence type="ECO:0000250" key="1">
    <source>
        <dbReference type="UniProtKB" id="P21685"/>
    </source>
</evidence>
<evidence type="ECO:0000255" key="2"/>
<evidence type="ECO:0000269" key="3">
    <source>
    </source>
</evidence>
<evidence type="ECO:0000269" key="4">
    <source>
    </source>
</evidence>
<evidence type="ECO:0000303" key="5">
    <source>
    </source>
</evidence>
<evidence type="ECO:0000303" key="6">
    <source>
    </source>
</evidence>
<evidence type="ECO:0000305" key="7"/>
<evidence type="ECO:0000305" key="8">
    <source>
    </source>
</evidence>
<name>CRTP_STAA8</name>
<dbReference type="EC" id="1.14.99.-" evidence="8"/>
<dbReference type="EMBL" id="CP000253">
    <property type="protein sequence ID" value="ABD31878.1"/>
    <property type="molecule type" value="Genomic_DNA"/>
</dbReference>
<dbReference type="RefSeq" id="WP_000160456.1">
    <property type="nucleotide sequence ID" value="NZ_LS483365.1"/>
</dbReference>
<dbReference type="RefSeq" id="YP_501335.1">
    <property type="nucleotide sequence ID" value="NC_007795.1"/>
</dbReference>
<dbReference type="SMR" id="Q2FV57"/>
<dbReference type="STRING" id="93061.SAOUHSC_02881"/>
<dbReference type="PaxDb" id="1280-SAXN108_2815"/>
<dbReference type="GeneID" id="3921551"/>
<dbReference type="KEGG" id="sao:SAOUHSC_02881"/>
<dbReference type="PATRIC" id="fig|93061.5.peg.2604"/>
<dbReference type="eggNOG" id="COG1233">
    <property type="taxonomic scope" value="Bacteria"/>
</dbReference>
<dbReference type="HOGENOM" id="CLU_019722_2_1_9"/>
<dbReference type="OrthoDB" id="9814556at2"/>
<dbReference type="BioCyc" id="MetaCyc:MONOMER-13879"/>
<dbReference type="UniPathway" id="UPA00029">
    <property type="reaction ID" value="UER00558"/>
</dbReference>
<dbReference type="PRO" id="PR:Q2FV57"/>
<dbReference type="Proteomes" id="UP000008816">
    <property type="component" value="Chromosome"/>
</dbReference>
<dbReference type="GO" id="GO:0016491">
    <property type="term" value="F:oxidoreductase activity"/>
    <property type="evidence" value="ECO:0007669"/>
    <property type="project" value="UniProtKB-KW"/>
</dbReference>
<dbReference type="GO" id="GO:0016117">
    <property type="term" value="P:carotenoid biosynthetic process"/>
    <property type="evidence" value="ECO:0007669"/>
    <property type="project" value="UniProtKB-KW"/>
</dbReference>
<dbReference type="Gene3D" id="3.50.50.60">
    <property type="entry name" value="FAD/NAD(P)-binding domain"/>
    <property type="match status" value="2"/>
</dbReference>
<dbReference type="InterPro" id="IPR002937">
    <property type="entry name" value="Amino_oxidase"/>
</dbReference>
<dbReference type="InterPro" id="IPR014105">
    <property type="entry name" value="Carotenoid/retinoid_OxRdtase"/>
</dbReference>
<dbReference type="InterPro" id="IPR036188">
    <property type="entry name" value="FAD/NAD-bd_sf"/>
</dbReference>
<dbReference type="NCBIfam" id="TIGR02734">
    <property type="entry name" value="crtI_fam"/>
    <property type="match status" value="1"/>
</dbReference>
<dbReference type="PANTHER" id="PTHR43734:SF7">
    <property type="entry name" value="4,4'-DIAPONEUROSPORENE OXYGENASE"/>
    <property type="match status" value="1"/>
</dbReference>
<dbReference type="PANTHER" id="PTHR43734">
    <property type="entry name" value="PHYTOENE DESATURASE"/>
    <property type="match status" value="1"/>
</dbReference>
<dbReference type="Pfam" id="PF01593">
    <property type="entry name" value="Amino_oxidase"/>
    <property type="match status" value="1"/>
</dbReference>
<dbReference type="SUPFAM" id="SSF51905">
    <property type="entry name" value="FAD/NAD(P)-binding domain"/>
    <property type="match status" value="1"/>
</dbReference>
<organism>
    <name type="scientific">Staphylococcus aureus (strain NCTC 8325 / PS 47)</name>
    <dbReference type="NCBI Taxonomy" id="93061"/>
    <lineage>
        <taxon>Bacteria</taxon>
        <taxon>Bacillati</taxon>
        <taxon>Bacillota</taxon>
        <taxon>Bacilli</taxon>
        <taxon>Bacillales</taxon>
        <taxon>Staphylococcaceae</taxon>
        <taxon>Staphylococcus</taxon>
    </lineage>
</organism>
<reference key="1">
    <citation type="book" date="2006" name="Gram positive pathogens, 2nd edition">
        <title>The Staphylococcus aureus NCTC 8325 genome.</title>
        <editorList>
            <person name="Fischetti V."/>
            <person name="Novick R."/>
            <person name="Ferretti J."/>
            <person name="Portnoy D."/>
            <person name="Rood J."/>
        </editorList>
        <authorList>
            <person name="Gillaspy A.F."/>
            <person name="Worrell V."/>
            <person name="Orvis J."/>
            <person name="Roe B.A."/>
            <person name="Dyer D.W."/>
            <person name="Iandolo J.J."/>
        </authorList>
    </citation>
    <scope>NUCLEOTIDE SEQUENCE [LARGE SCALE GENOMIC DNA]</scope>
    <source>
        <strain>NCTC 8325 / PS 47</strain>
    </source>
</reference>
<reference key="2">
    <citation type="journal article" date="2005" name="Appl. Environ. Microbiol.">
        <title>Novel carotenoid oxidase involved in biosynthesis of 4,4'-diapolycopene dialdehyde.</title>
        <authorList>
            <person name="Tao L."/>
            <person name="Schenzle A."/>
            <person name="Odom J.M."/>
            <person name="Cheng Q."/>
        </authorList>
    </citation>
    <scope>FUNCTION</scope>
    <scope>CATALYTIC ACTIVITY</scope>
    <scope>SUBSTRATE SPECIFICITY</scope>
    <source>
        <strain>NCTC 8325 / PS 47</strain>
    </source>
</reference>
<reference key="3">
    <citation type="journal article" date="2012" name="J. Biol. Chem.">
        <title>Functional expression and extension of staphylococcal staphyloxanthin biosynthetic pathway in Escherichia coli.</title>
        <authorList>
            <person name="Kim S.H."/>
            <person name="Lee P.C."/>
        </authorList>
    </citation>
    <scope>FUNCTION</scope>
    <scope>PATHWAY</scope>
    <source>
        <strain>KCTC 1928</strain>
    </source>
</reference>
<feature type="chain" id="PRO_0000285231" description="4,4'-diaponeurosporene oxygenase">
    <location>
        <begin position="1"/>
        <end position="497"/>
    </location>
</feature>
<feature type="binding site" evidence="2">
    <location>
        <begin position="7"/>
        <end position="19"/>
    </location>
    <ligand>
        <name>FAD</name>
        <dbReference type="ChEBI" id="CHEBI:57692"/>
    </ligand>
</feature>
<protein>
    <recommendedName>
        <fullName evidence="5">4,4'-diaponeurosporene oxygenase</fullName>
        <ecNumber evidence="8">1.14.99.-</ecNumber>
    </recommendedName>
    <alternativeName>
        <fullName evidence="6">4,4'-diaponeurosporene oxidase</fullName>
    </alternativeName>
    <alternativeName>
        <fullName evidence="5">Carotenoid oxidase</fullName>
    </alternativeName>
</protein>
<proteinExistence type="evidence at protein level"/>